<organism>
    <name type="scientific">Haemophilus influenzae (strain PittEE)</name>
    <dbReference type="NCBI Taxonomy" id="374930"/>
    <lineage>
        <taxon>Bacteria</taxon>
        <taxon>Pseudomonadati</taxon>
        <taxon>Pseudomonadota</taxon>
        <taxon>Gammaproteobacteria</taxon>
        <taxon>Pasteurellales</taxon>
        <taxon>Pasteurellaceae</taxon>
        <taxon>Haemophilus</taxon>
    </lineage>
</organism>
<sequence>MAKEDCIEMQGTILETLPNTMFRVELENGHVVTAHISGKMRKNYIRILTGDKVTVEMTPYDLSKGRIIFRSR</sequence>
<gene>
    <name evidence="1" type="primary">infA</name>
    <name type="ordered locus">CGSHiEE_00245</name>
</gene>
<proteinExistence type="inferred from homology"/>
<reference key="1">
    <citation type="journal article" date="2007" name="Genome Biol.">
        <title>Characterization and modeling of the Haemophilus influenzae core and supragenomes based on the complete genomic sequences of Rd and 12 clinical nontypeable strains.</title>
        <authorList>
            <person name="Hogg J.S."/>
            <person name="Hu F.Z."/>
            <person name="Janto B."/>
            <person name="Boissy R."/>
            <person name="Hayes J."/>
            <person name="Keefe R."/>
            <person name="Post J.C."/>
            <person name="Ehrlich G.D."/>
        </authorList>
    </citation>
    <scope>NUCLEOTIDE SEQUENCE [LARGE SCALE GENOMIC DNA]</scope>
    <source>
        <strain>PittEE</strain>
    </source>
</reference>
<evidence type="ECO:0000255" key="1">
    <source>
        <dbReference type="HAMAP-Rule" id="MF_00075"/>
    </source>
</evidence>
<accession>A5U9U6</accession>
<name>IF1_HAEIE</name>
<dbReference type="EMBL" id="CP000671">
    <property type="protein sequence ID" value="ABQ97547.1"/>
    <property type="molecule type" value="Genomic_DNA"/>
</dbReference>
<dbReference type="SMR" id="A5U9U6"/>
<dbReference type="KEGG" id="hip:CGSHiEE_00245"/>
<dbReference type="HOGENOM" id="CLU_151267_1_0_6"/>
<dbReference type="GO" id="GO:0005829">
    <property type="term" value="C:cytosol"/>
    <property type="evidence" value="ECO:0007669"/>
    <property type="project" value="TreeGrafter"/>
</dbReference>
<dbReference type="GO" id="GO:0043022">
    <property type="term" value="F:ribosome binding"/>
    <property type="evidence" value="ECO:0007669"/>
    <property type="project" value="UniProtKB-UniRule"/>
</dbReference>
<dbReference type="GO" id="GO:0019843">
    <property type="term" value="F:rRNA binding"/>
    <property type="evidence" value="ECO:0007669"/>
    <property type="project" value="UniProtKB-UniRule"/>
</dbReference>
<dbReference type="GO" id="GO:0003743">
    <property type="term" value="F:translation initiation factor activity"/>
    <property type="evidence" value="ECO:0007669"/>
    <property type="project" value="UniProtKB-UniRule"/>
</dbReference>
<dbReference type="CDD" id="cd04451">
    <property type="entry name" value="S1_IF1"/>
    <property type="match status" value="1"/>
</dbReference>
<dbReference type="FunFam" id="2.40.50.140:FF:000002">
    <property type="entry name" value="Translation initiation factor IF-1"/>
    <property type="match status" value="1"/>
</dbReference>
<dbReference type="Gene3D" id="2.40.50.140">
    <property type="entry name" value="Nucleic acid-binding proteins"/>
    <property type="match status" value="1"/>
</dbReference>
<dbReference type="HAMAP" id="MF_00075">
    <property type="entry name" value="IF_1"/>
    <property type="match status" value="1"/>
</dbReference>
<dbReference type="InterPro" id="IPR012340">
    <property type="entry name" value="NA-bd_OB-fold"/>
</dbReference>
<dbReference type="InterPro" id="IPR006196">
    <property type="entry name" value="RNA-binding_domain_S1_IF1"/>
</dbReference>
<dbReference type="InterPro" id="IPR003029">
    <property type="entry name" value="S1_domain"/>
</dbReference>
<dbReference type="InterPro" id="IPR004368">
    <property type="entry name" value="TIF_IF1"/>
</dbReference>
<dbReference type="NCBIfam" id="TIGR00008">
    <property type="entry name" value="infA"/>
    <property type="match status" value="1"/>
</dbReference>
<dbReference type="PANTHER" id="PTHR33370">
    <property type="entry name" value="TRANSLATION INITIATION FACTOR IF-1, CHLOROPLASTIC"/>
    <property type="match status" value="1"/>
</dbReference>
<dbReference type="PANTHER" id="PTHR33370:SF1">
    <property type="entry name" value="TRANSLATION INITIATION FACTOR IF-1, CHLOROPLASTIC"/>
    <property type="match status" value="1"/>
</dbReference>
<dbReference type="Pfam" id="PF01176">
    <property type="entry name" value="eIF-1a"/>
    <property type="match status" value="1"/>
</dbReference>
<dbReference type="SMART" id="SM00316">
    <property type="entry name" value="S1"/>
    <property type="match status" value="1"/>
</dbReference>
<dbReference type="SUPFAM" id="SSF50249">
    <property type="entry name" value="Nucleic acid-binding proteins"/>
    <property type="match status" value="1"/>
</dbReference>
<dbReference type="PROSITE" id="PS50832">
    <property type="entry name" value="S1_IF1_TYPE"/>
    <property type="match status" value="1"/>
</dbReference>
<comment type="function">
    <text evidence="1">One of the essential components for the initiation of protein synthesis. Stabilizes the binding of IF-2 and IF-3 on the 30S subunit to which N-formylmethionyl-tRNA(fMet) subsequently binds. Helps modulate mRNA selection, yielding the 30S pre-initiation complex (PIC). Upon addition of the 50S ribosomal subunit IF-1, IF-2 and IF-3 are released leaving the mature 70S translation initiation complex.</text>
</comment>
<comment type="subunit">
    <text evidence="1">Component of the 30S ribosomal translation pre-initiation complex which assembles on the 30S ribosome in the order IF-2 and IF-3, IF-1 and N-formylmethionyl-tRNA(fMet); mRNA recruitment can occur at any time during PIC assembly.</text>
</comment>
<comment type="subcellular location">
    <subcellularLocation>
        <location evidence="1">Cytoplasm</location>
    </subcellularLocation>
</comment>
<comment type="similarity">
    <text evidence="1">Belongs to the IF-1 family.</text>
</comment>
<keyword id="KW-0963">Cytoplasm</keyword>
<keyword id="KW-0396">Initiation factor</keyword>
<keyword id="KW-0648">Protein biosynthesis</keyword>
<keyword id="KW-0694">RNA-binding</keyword>
<keyword id="KW-0699">rRNA-binding</keyword>
<protein>
    <recommendedName>
        <fullName evidence="1">Translation initiation factor IF-1</fullName>
    </recommendedName>
</protein>
<feature type="chain" id="PRO_0000338835" description="Translation initiation factor IF-1">
    <location>
        <begin position="1"/>
        <end position="72"/>
    </location>
</feature>
<feature type="domain" description="S1-like" evidence="1">
    <location>
        <begin position="1"/>
        <end position="72"/>
    </location>
</feature>